<evidence type="ECO:0000269" key="1">
    <source>
    </source>
</evidence>
<evidence type="ECO:0000269" key="2">
    <source>
    </source>
</evidence>
<evidence type="ECO:0000303" key="3">
    <source>
    </source>
</evidence>
<evidence type="ECO:0000305" key="4"/>
<evidence type="ECO:0000312" key="5">
    <source>
        <dbReference type="EMBL" id="AAS77189.1"/>
    </source>
</evidence>
<evidence type="ECO:0000312" key="6">
    <source>
        <dbReference type="EMBL" id="AAU05285.1"/>
    </source>
</evidence>
<evidence type="ECO:0000312" key="7">
    <source>
        <dbReference type="EMBL" id="AAX12076.1"/>
    </source>
</evidence>
<comment type="function">
    <text evidence="1 2">Serine protease involved in capsid assembly and maturation. Cleaves the major capsid protein, the decoration protein, the portal protein to yield mature procapsids competent for DNA packaging (Probable). Acts as a trigger for assembly of the capsid protein.</text>
</comment>
<comment type="subcellular location">
    <subcellularLocation>
        <location evidence="1">Virion</location>
    </subcellularLocation>
    <text evidence="1">Present in the prohead I.</text>
</comment>
<comment type="PTM">
    <text evidence="1">Cleaves itself autocatalytically to yield the mature form of the protease (Probable).</text>
</comment>
<comment type="similarity">
    <text evidence="4">Belongs to the HK97 prohead protease protein family.</text>
</comment>
<proteinExistence type="evidence at protein level"/>
<accession>Q6QGD7</accession>
<accession>Q66LR7</accession>
<organismHost>
    <name type="scientific">Escherichia coli</name>
    <dbReference type="NCBI Taxonomy" id="562"/>
</organismHost>
<dbReference type="EC" id="3.4.21.-"/>
<dbReference type="EMBL" id="AY543070">
    <property type="protein sequence ID" value="AAS77189.1"/>
    <property type="molecule type" value="Genomic_DNA"/>
</dbReference>
<dbReference type="EMBL" id="AY587007">
    <property type="protein sequence ID" value="AAX12076.1"/>
    <property type="molecule type" value="Genomic_DNA"/>
</dbReference>
<dbReference type="EMBL" id="AY692264">
    <property type="protein sequence ID" value="AAU05285.1"/>
    <property type="molecule type" value="Genomic_DNA"/>
</dbReference>
<dbReference type="RefSeq" id="YP_006978.1">
    <property type="nucleotide sequence ID" value="NC_005859.1"/>
</dbReference>
<dbReference type="MEROPS" id="S78.002"/>
<dbReference type="GeneID" id="2777674"/>
<dbReference type="KEGG" id="vg:2777674"/>
<dbReference type="Proteomes" id="UP000002107">
    <property type="component" value="Genome"/>
</dbReference>
<dbReference type="Proteomes" id="UP000002141">
    <property type="component" value="Segment"/>
</dbReference>
<dbReference type="Proteomes" id="UP000002503">
    <property type="component" value="Segment"/>
</dbReference>
<dbReference type="GO" id="GO:0044423">
    <property type="term" value="C:virion component"/>
    <property type="evidence" value="ECO:0007669"/>
    <property type="project" value="UniProtKB-KW"/>
</dbReference>
<dbReference type="GO" id="GO:0008233">
    <property type="term" value="F:peptidase activity"/>
    <property type="evidence" value="ECO:0000314"/>
    <property type="project" value="UniProtKB"/>
</dbReference>
<dbReference type="GO" id="GO:0008236">
    <property type="term" value="F:serine-type peptidase activity"/>
    <property type="evidence" value="ECO:0007669"/>
    <property type="project" value="UniProtKB-KW"/>
</dbReference>
<dbReference type="GO" id="GO:0006508">
    <property type="term" value="P:proteolysis"/>
    <property type="evidence" value="ECO:0007669"/>
    <property type="project" value="UniProtKB-KW"/>
</dbReference>
<dbReference type="GO" id="GO:0046797">
    <property type="term" value="P:viral procapsid maturation"/>
    <property type="evidence" value="ECO:0007669"/>
    <property type="project" value="UniProtKB-KW"/>
</dbReference>
<dbReference type="InterPro" id="IPR054613">
    <property type="entry name" value="Peptidase_S78_dom"/>
</dbReference>
<dbReference type="InterPro" id="IPR006433">
    <property type="entry name" value="Prohead_protease"/>
</dbReference>
<dbReference type="NCBIfam" id="TIGR01543">
    <property type="entry name" value="proheadase_HK97"/>
    <property type="match status" value="1"/>
</dbReference>
<dbReference type="Pfam" id="PF04586">
    <property type="entry name" value="Peptidase_S78"/>
    <property type="match status" value="1"/>
</dbReference>
<protein>
    <recommendedName>
        <fullName evidence="3">Prohead protease</fullName>
        <ecNumber>3.4.21.-</ecNumber>
    </recommendedName>
</protein>
<name>PRO_BPT5</name>
<keyword id="KW-0378">Hydrolase</keyword>
<keyword id="KW-0426">Late protein</keyword>
<keyword id="KW-0645">Protease</keyword>
<keyword id="KW-1185">Reference proteome</keyword>
<keyword id="KW-0720">Serine protease</keyword>
<keyword id="KW-0118">Viral capsid assembly</keyword>
<keyword id="KW-1273">Viral capsid maturation</keyword>
<keyword id="KW-1188">Viral release from host cell</keyword>
<keyword id="KW-0946">Virion</keyword>
<organism>
    <name type="scientific">Escherichia phage T5</name>
    <name type="common">Enterobacteria phage T5</name>
    <dbReference type="NCBI Taxonomy" id="2695836"/>
    <lineage>
        <taxon>Viruses</taxon>
        <taxon>Duplodnaviria</taxon>
        <taxon>Heunggongvirae</taxon>
        <taxon>Uroviricota</taxon>
        <taxon>Caudoviricetes</taxon>
        <taxon>Demerecviridae</taxon>
        <taxon>Markadamsvirinae</taxon>
        <taxon>Tequintavirus</taxon>
        <taxon>Tequintavirus T5</taxon>
    </lineage>
</organism>
<gene>
    <name evidence="5" type="ORF">T5.150</name>
    <name evidence="6" type="ORF">T5p146</name>
</gene>
<reference key="1">
    <citation type="submission" date="2004-01" db="EMBL/GenBank/DDBJ databases">
        <title>Bacteriophage T5 complete genome.</title>
        <authorList>
            <person name="Ksenzenko V.N."/>
            <person name="Kaliman A.V."/>
            <person name="Krutilina A.I."/>
            <person name="Shlyapnikov M.G."/>
        </authorList>
    </citation>
    <scope>NUCLEOTIDE SEQUENCE [LARGE SCALE GENOMIC DNA]</scope>
</reference>
<reference key="2">
    <citation type="journal article" date="2005" name="Virology">
        <title>Complete genome sequence of bacteriophage T5.</title>
        <authorList>
            <person name="Wang J."/>
            <person name="Jiang Y."/>
            <person name="Vincent M."/>
            <person name="Sun Y."/>
            <person name="Yu H."/>
            <person name="Wang J."/>
            <person name="Bao Q."/>
            <person name="Kong H."/>
            <person name="Hu S."/>
        </authorList>
    </citation>
    <scope>NUCLEOTIDE SEQUENCE [LARGE SCALE GENOMIC DNA]</scope>
    <scope>INDUCTION</scope>
    <source>
        <strain evidence="7">ATCC 11303-B5</strain>
    </source>
</reference>
<reference key="3">
    <citation type="journal article" date="2014" name="J. Virol.">
        <title>Insights into bacteriophage T5 structure from analysis of its morphogenesis genes and protein components.</title>
        <authorList>
            <person name="Zivanovic Y."/>
            <person name="Confalonieri F."/>
            <person name="Ponchon L."/>
            <person name="Lurz R."/>
            <person name="Chami M."/>
            <person name="Flayhan A."/>
            <person name="Renouard M."/>
            <person name="Huet A."/>
            <person name="Decottignies P."/>
            <person name="Davidson A.R."/>
            <person name="Breyton C."/>
            <person name="Boulanger P."/>
        </authorList>
    </citation>
    <scope>NUCLEOTIDE SEQUENCE [LARGE SCALE GENOMIC DNA]</scope>
    <scope>SUBCELLULAR LOCATION</scope>
    <scope>FUNCTION</scope>
    <scope>PROTEOLYTIC CLEAVAGE</scope>
    <source>
        <strain>St0 deletion mutant</strain>
    </source>
</reference>
<reference key="4">
    <citation type="journal article" date="2016" name="J. Mol. Biol.">
        <title>Correct assembly of the bacteriophage T5 procapsid requires both the maturation protease and the portal complex.</title>
        <authorList>
            <person name="Huet A."/>
            <person name="Duda R.L."/>
            <person name="Hendrix R.W."/>
            <person name="Boulanger P."/>
            <person name="Conway J.F."/>
        </authorList>
    </citation>
    <scope>STRUCTURE BY ELECTRON MICROSCOPY (30.0 ANGSTROMS) OF THE CAPSID</scope>
    <scope>FUNCTION</scope>
    <scope>MUTAGENESIS OF HIS-76; SER-122 AND GLU-148</scope>
    <scope>ACTIVE SITE</scope>
</reference>
<feature type="propeptide" id="PRO_0000435557" evidence="1">
    <location>
        <begin position="1"/>
        <end position="23"/>
    </location>
</feature>
<feature type="chain" id="PRO_0000435558" description="Prohead protease">
    <location>
        <begin position="24"/>
        <end position="166"/>
    </location>
</feature>
<feature type="propeptide" id="PRO_0000435559" evidence="1">
    <location>
        <begin position="167"/>
        <end position="210"/>
    </location>
</feature>
<feature type="active site" evidence="2">
    <location>
        <position position="76"/>
    </location>
</feature>
<feature type="active site" evidence="2">
    <location>
        <position position="122"/>
    </location>
</feature>
<feature type="active site" evidence="2">
    <location>
        <position position="148"/>
    </location>
</feature>
<feature type="site" description="Cleavage; by autolysis" evidence="1">
    <location>
        <begin position="23"/>
        <end position="24"/>
    </location>
</feature>
<feature type="site" description="Cleavage; by autolysis" evidence="1">
    <location>
        <begin position="166"/>
        <end position="167"/>
    </location>
</feature>
<feature type="mutagenesis site" description="Complete loss of protease activity." evidence="2">
    <original>H</original>
    <variation>A</variation>
    <variation>Y</variation>
    <location>
        <position position="76"/>
    </location>
</feature>
<feature type="mutagenesis site" description="Complete loss of protease activity." evidence="2">
    <original>S</original>
    <variation>A</variation>
    <location>
        <position position="122"/>
    </location>
</feature>
<feature type="mutagenesis site" description="Complete loss of protease activity." evidence="2">
    <original>E</original>
    <variation>A</variation>
    <location>
        <position position="148"/>
    </location>
</feature>
<feature type="sequence conflict" description="In Ref. 2; AAX12076 and 3; AAU05285." evidence="4" ref="2 3">
    <original>N</original>
    <variation>Y</variation>
    <location>
        <position position="102"/>
    </location>
</feature>
<sequence>MTQAAIDYNKLKSAPVHLDAYIKSIDSESKEGVVKIRGFANTISKDRAGDVIPASAWKTSNALTNYMKNPIILFGHDHRRPIGKCIDLNPTEMGLEIECEINESSDPAIFSLIKNGVLKTFSIGFRCLDAEWDEATDIFIIKDLELYEVSVVSVPCNQDSTFNLAKSMNGHDYTEWRKSFTAISSKAVPAQERNLSELEKLAIALGYVKE</sequence>